<gene>
    <name evidence="1" type="primary">glmM</name>
    <name type="ordered locus">Gbem_2635</name>
</gene>
<organism>
    <name type="scientific">Citrifermentans bemidjiense (strain ATCC BAA-1014 / DSM 16622 / JCM 12645 / Bem)</name>
    <name type="common">Geobacter bemidjiensis</name>
    <dbReference type="NCBI Taxonomy" id="404380"/>
    <lineage>
        <taxon>Bacteria</taxon>
        <taxon>Pseudomonadati</taxon>
        <taxon>Thermodesulfobacteriota</taxon>
        <taxon>Desulfuromonadia</taxon>
        <taxon>Geobacterales</taxon>
        <taxon>Geobacteraceae</taxon>
        <taxon>Citrifermentans</taxon>
    </lineage>
</organism>
<feature type="chain" id="PRO_1000201103" description="Phosphoglucosamine mutase">
    <location>
        <begin position="1"/>
        <end position="454"/>
    </location>
</feature>
<feature type="active site" description="Phosphoserine intermediate" evidence="1">
    <location>
        <position position="101"/>
    </location>
</feature>
<feature type="binding site" description="via phosphate group" evidence="1">
    <location>
        <position position="101"/>
    </location>
    <ligand>
        <name>Mg(2+)</name>
        <dbReference type="ChEBI" id="CHEBI:18420"/>
    </ligand>
</feature>
<feature type="binding site" evidence="1">
    <location>
        <position position="243"/>
    </location>
    <ligand>
        <name>Mg(2+)</name>
        <dbReference type="ChEBI" id="CHEBI:18420"/>
    </ligand>
</feature>
<feature type="binding site" evidence="1">
    <location>
        <position position="245"/>
    </location>
    <ligand>
        <name>Mg(2+)</name>
        <dbReference type="ChEBI" id="CHEBI:18420"/>
    </ligand>
</feature>
<feature type="binding site" evidence="1">
    <location>
        <position position="247"/>
    </location>
    <ligand>
        <name>Mg(2+)</name>
        <dbReference type="ChEBI" id="CHEBI:18420"/>
    </ligand>
</feature>
<feature type="modified residue" description="Phosphoserine" evidence="1">
    <location>
        <position position="101"/>
    </location>
</feature>
<dbReference type="EC" id="5.4.2.10" evidence="1"/>
<dbReference type="EMBL" id="CP001124">
    <property type="protein sequence ID" value="ACH39643.1"/>
    <property type="molecule type" value="Genomic_DNA"/>
</dbReference>
<dbReference type="RefSeq" id="WP_012531065.1">
    <property type="nucleotide sequence ID" value="NC_011146.1"/>
</dbReference>
<dbReference type="SMR" id="B5EHA7"/>
<dbReference type="STRING" id="404380.Gbem_2635"/>
<dbReference type="KEGG" id="gbm:Gbem_2635"/>
<dbReference type="eggNOG" id="COG1109">
    <property type="taxonomic scope" value="Bacteria"/>
</dbReference>
<dbReference type="HOGENOM" id="CLU_016950_7_0_7"/>
<dbReference type="OrthoDB" id="9806956at2"/>
<dbReference type="Proteomes" id="UP000008825">
    <property type="component" value="Chromosome"/>
</dbReference>
<dbReference type="GO" id="GO:0005829">
    <property type="term" value="C:cytosol"/>
    <property type="evidence" value="ECO:0007669"/>
    <property type="project" value="TreeGrafter"/>
</dbReference>
<dbReference type="GO" id="GO:0000287">
    <property type="term" value="F:magnesium ion binding"/>
    <property type="evidence" value="ECO:0007669"/>
    <property type="project" value="UniProtKB-UniRule"/>
</dbReference>
<dbReference type="GO" id="GO:0008966">
    <property type="term" value="F:phosphoglucosamine mutase activity"/>
    <property type="evidence" value="ECO:0007669"/>
    <property type="project" value="UniProtKB-UniRule"/>
</dbReference>
<dbReference type="GO" id="GO:0004615">
    <property type="term" value="F:phosphomannomutase activity"/>
    <property type="evidence" value="ECO:0007669"/>
    <property type="project" value="TreeGrafter"/>
</dbReference>
<dbReference type="GO" id="GO:0005975">
    <property type="term" value="P:carbohydrate metabolic process"/>
    <property type="evidence" value="ECO:0007669"/>
    <property type="project" value="InterPro"/>
</dbReference>
<dbReference type="GO" id="GO:0009252">
    <property type="term" value="P:peptidoglycan biosynthetic process"/>
    <property type="evidence" value="ECO:0007669"/>
    <property type="project" value="TreeGrafter"/>
</dbReference>
<dbReference type="GO" id="GO:0006048">
    <property type="term" value="P:UDP-N-acetylglucosamine biosynthetic process"/>
    <property type="evidence" value="ECO:0007669"/>
    <property type="project" value="TreeGrafter"/>
</dbReference>
<dbReference type="CDD" id="cd05802">
    <property type="entry name" value="GlmM"/>
    <property type="match status" value="1"/>
</dbReference>
<dbReference type="FunFam" id="3.30.310.50:FF:000001">
    <property type="entry name" value="Phosphoglucosamine mutase"/>
    <property type="match status" value="1"/>
</dbReference>
<dbReference type="FunFam" id="3.40.120.10:FF:000001">
    <property type="entry name" value="Phosphoglucosamine mutase"/>
    <property type="match status" value="1"/>
</dbReference>
<dbReference type="FunFam" id="3.40.120.10:FF:000002">
    <property type="entry name" value="Phosphoglucosamine mutase"/>
    <property type="match status" value="1"/>
</dbReference>
<dbReference type="Gene3D" id="3.40.120.10">
    <property type="entry name" value="Alpha-D-Glucose-1,6-Bisphosphate, subunit A, domain 3"/>
    <property type="match status" value="3"/>
</dbReference>
<dbReference type="Gene3D" id="3.30.310.50">
    <property type="entry name" value="Alpha-D-phosphohexomutase, C-terminal domain"/>
    <property type="match status" value="1"/>
</dbReference>
<dbReference type="HAMAP" id="MF_01554_B">
    <property type="entry name" value="GlmM_B"/>
    <property type="match status" value="1"/>
</dbReference>
<dbReference type="InterPro" id="IPR005844">
    <property type="entry name" value="A-D-PHexomutase_a/b/a-I"/>
</dbReference>
<dbReference type="InterPro" id="IPR016055">
    <property type="entry name" value="A-D-PHexomutase_a/b/a-I/II/III"/>
</dbReference>
<dbReference type="InterPro" id="IPR005845">
    <property type="entry name" value="A-D-PHexomutase_a/b/a-II"/>
</dbReference>
<dbReference type="InterPro" id="IPR005846">
    <property type="entry name" value="A-D-PHexomutase_a/b/a-III"/>
</dbReference>
<dbReference type="InterPro" id="IPR005843">
    <property type="entry name" value="A-D-PHexomutase_C"/>
</dbReference>
<dbReference type="InterPro" id="IPR036900">
    <property type="entry name" value="A-D-PHexomutase_C_sf"/>
</dbReference>
<dbReference type="InterPro" id="IPR016066">
    <property type="entry name" value="A-D-PHexomutase_CS"/>
</dbReference>
<dbReference type="InterPro" id="IPR005841">
    <property type="entry name" value="Alpha-D-phosphohexomutase_SF"/>
</dbReference>
<dbReference type="InterPro" id="IPR006352">
    <property type="entry name" value="GlmM_bact"/>
</dbReference>
<dbReference type="InterPro" id="IPR050060">
    <property type="entry name" value="Phosphoglucosamine_mutase"/>
</dbReference>
<dbReference type="NCBIfam" id="TIGR01455">
    <property type="entry name" value="glmM"/>
    <property type="match status" value="1"/>
</dbReference>
<dbReference type="NCBIfam" id="NF008139">
    <property type="entry name" value="PRK10887.1"/>
    <property type="match status" value="1"/>
</dbReference>
<dbReference type="PANTHER" id="PTHR42946:SF1">
    <property type="entry name" value="PHOSPHOGLUCOMUTASE (ALPHA-D-GLUCOSE-1,6-BISPHOSPHATE-DEPENDENT)"/>
    <property type="match status" value="1"/>
</dbReference>
<dbReference type="PANTHER" id="PTHR42946">
    <property type="entry name" value="PHOSPHOHEXOSE MUTASE"/>
    <property type="match status" value="1"/>
</dbReference>
<dbReference type="Pfam" id="PF02878">
    <property type="entry name" value="PGM_PMM_I"/>
    <property type="match status" value="1"/>
</dbReference>
<dbReference type="Pfam" id="PF02879">
    <property type="entry name" value="PGM_PMM_II"/>
    <property type="match status" value="1"/>
</dbReference>
<dbReference type="Pfam" id="PF02880">
    <property type="entry name" value="PGM_PMM_III"/>
    <property type="match status" value="1"/>
</dbReference>
<dbReference type="Pfam" id="PF00408">
    <property type="entry name" value="PGM_PMM_IV"/>
    <property type="match status" value="1"/>
</dbReference>
<dbReference type="PRINTS" id="PR00509">
    <property type="entry name" value="PGMPMM"/>
</dbReference>
<dbReference type="SUPFAM" id="SSF55957">
    <property type="entry name" value="Phosphoglucomutase, C-terminal domain"/>
    <property type="match status" value="1"/>
</dbReference>
<dbReference type="SUPFAM" id="SSF53738">
    <property type="entry name" value="Phosphoglucomutase, first 3 domains"/>
    <property type="match status" value="3"/>
</dbReference>
<dbReference type="PROSITE" id="PS00710">
    <property type="entry name" value="PGM_PMM"/>
    <property type="match status" value="1"/>
</dbReference>
<protein>
    <recommendedName>
        <fullName evidence="1">Phosphoglucosamine mutase</fullName>
        <ecNumber evidence="1">5.4.2.10</ecNumber>
    </recommendedName>
</protein>
<evidence type="ECO:0000255" key="1">
    <source>
        <dbReference type="HAMAP-Rule" id="MF_01554"/>
    </source>
</evidence>
<name>GLMM_CITBB</name>
<accession>B5EHA7</accession>
<keyword id="KW-0413">Isomerase</keyword>
<keyword id="KW-0460">Magnesium</keyword>
<keyword id="KW-0479">Metal-binding</keyword>
<keyword id="KW-0597">Phosphoprotein</keyword>
<keyword id="KW-1185">Reference proteome</keyword>
<sequence length="454" mass="49085">MKKLFGTDGVRGVANVYPMTAEMAMQIGRAAAYIFKNGKKRHRIVIGKDTRLSGYMLESALMAGICSMGVDVLLVGPLPTPGIANITSSMRADAGVVISASHNPFEDNGIKFFSRDGFKLPDETELMMEELIFSKRIDSLRPTAKEVGKAYRIDDAQGRFVVFLKSTFPKDLDLSGLKIVLDCANGAAYKVAPAVFEELGAEVISIGVKPNGTNINADCGSLHPEVMSQAVKEHGADLGVALDGDADRVIFVDEYGNVVDGDRIMAICATEMIRQGILKQNTLVATVMSNMGLDIAMKRAGGQVIKTAVGDRYVVEEMLKGGYNLGGEQSGHMIFLDHNTTGDGVLSALQVLAIMQRHQKRLSELALVMEPLPQVLVNVRLAEKSDIMQVPEIAKLINDVEEKLKGEGRVLIRYSGTEPLLRIMLEGSDEGDIRCWANDIASIVAQKLGGEARG</sequence>
<proteinExistence type="inferred from homology"/>
<comment type="function">
    <text evidence="1">Catalyzes the conversion of glucosamine-6-phosphate to glucosamine-1-phosphate.</text>
</comment>
<comment type="catalytic activity">
    <reaction evidence="1">
        <text>alpha-D-glucosamine 1-phosphate = D-glucosamine 6-phosphate</text>
        <dbReference type="Rhea" id="RHEA:23424"/>
        <dbReference type="ChEBI" id="CHEBI:58516"/>
        <dbReference type="ChEBI" id="CHEBI:58725"/>
        <dbReference type="EC" id="5.4.2.10"/>
    </reaction>
</comment>
<comment type="cofactor">
    <cofactor evidence="1">
        <name>Mg(2+)</name>
        <dbReference type="ChEBI" id="CHEBI:18420"/>
    </cofactor>
    <text evidence="1">Binds 1 Mg(2+) ion per subunit.</text>
</comment>
<comment type="PTM">
    <text evidence="1">Activated by phosphorylation.</text>
</comment>
<comment type="similarity">
    <text evidence="1">Belongs to the phosphohexose mutase family.</text>
</comment>
<reference key="1">
    <citation type="submission" date="2008-07" db="EMBL/GenBank/DDBJ databases">
        <title>Complete sequence of Geobacter bemidjiensis BEM.</title>
        <authorList>
            <consortium name="US DOE Joint Genome Institute"/>
            <person name="Lucas S."/>
            <person name="Copeland A."/>
            <person name="Lapidus A."/>
            <person name="Glavina del Rio T."/>
            <person name="Dalin E."/>
            <person name="Tice H."/>
            <person name="Bruce D."/>
            <person name="Goodwin L."/>
            <person name="Pitluck S."/>
            <person name="Kiss H."/>
            <person name="Brettin T."/>
            <person name="Detter J.C."/>
            <person name="Han C."/>
            <person name="Kuske C.R."/>
            <person name="Schmutz J."/>
            <person name="Larimer F."/>
            <person name="Land M."/>
            <person name="Hauser L."/>
            <person name="Kyrpides N."/>
            <person name="Lykidis A."/>
            <person name="Lovley D."/>
            <person name="Richardson P."/>
        </authorList>
    </citation>
    <scope>NUCLEOTIDE SEQUENCE [LARGE SCALE GENOMIC DNA]</scope>
    <source>
        <strain>ATCC BAA-1014 / DSM 16622 / JCM 12645 / Bem</strain>
    </source>
</reference>